<gene>
    <name type="ORF">GD25298</name>
</gene>
<name>AKTP2_DROSI</name>
<protein>
    <recommendedName>
        <fullName>Protein crossbronx-like</fullName>
    </recommendedName>
</protein>
<feature type="chain" id="PRO_0000379049" description="Protein crossbronx-like">
    <location>
        <begin position="1"/>
        <end position="188"/>
    </location>
</feature>
<feature type="domain" description="UBC core" evidence="1">
    <location>
        <begin position="15"/>
        <end position="174"/>
    </location>
</feature>
<reference key="1">
    <citation type="journal article" date="2007" name="Nature">
        <title>Evolution of genes and genomes on the Drosophila phylogeny.</title>
        <authorList>
            <consortium name="Drosophila 12 genomes consortium"/>
        </authorList>
    </citation>
    <scope>NUCLEOTIDE SEQUENCE [LARGE SCALE GENOMIC DNA]</scope>
</reference>
<sequence length="188" mass="21687">MWYTTVRNPSIALIKQGYHILAEYNLVKEELKNIYAIPSYACGLHWFGVIFVHSGIYAGSVFRFSILLPDNFPVDISLPTVVFSTAVLHPHICPQNKTLDLAHFLNEWRKDEHHIWHPYCAERHLKFMDQLKSPCWKEATSMDCSQPSQYLGHIDSSRQLDEEEANQVVKLHCGRVPEPQREAAEVSL</sequence>
<dbReference type="EMBL" id="CM000362">
    <property type="protein sequence ID" value="EDX07873.1"/>
    <property type="status" value="ALT_SEQ"/>
    <property type="molecule type" value="Genomic_DNA"/>
</dbReference>
<dbReference type="SMR" id="B4QEJ9"/>
<dbReference type="STRING" id="7240.B4QEJ9"/>
<dbReference type="HOGENOM" id="CLU_083049_2_0_1"/>
<dbReference type="OMA" id="HPYCAER"/>
<dbReference type="OrthoDB" id="5596422at2759"/>
<dbReference type="PhylomeDB" id="B4QEJ9"/>
<dbReference type="Proteomes" id="UP000000304">
    <property type="component" value="Chromosome 2R"/>
</dbReference>
<dbReference type="CDD" id="cd23814">
    <property type="entry name" value="UEV_AKTIP"/>
    <property type="match status" value="1"/>
</dbReference>
<dbReference type="Gene3D" id="3.10.110.10">
    <property type="entry name" value="Ubiquitin Conjugating Enzyme"/>
    <property type="match status" value="1"/>
</dbReference>
<dbReference type="InterPro" id="IPR000608">
    <property type="entry name" value="UBQ-conjugat_E2_core"/>
</dbReference>
<dbReference type="InterPro" id="IPR016135">
    <property type="entry name" value="UBQ-conjugating_enzyme/RWD"/>
</dbReference>
<dbReference type="Pfam" id="PF00179">
    <property type="entry name" value="UQ_con"/>
    <property type="match status" value="1"/>
</dbReference>
<dbReference type="SUPFAM" id="SSF54495">
    <property type="entry name" value="UBC-like"/>
    <property type="match status" value="1"/>
</dbReference>
<dbReference type="PROSITE" id="PS50127">
    <property type="entry name" value="UBC_2"/>
    <property type="match status" value="1"/>
</dbReference>
<accession>B4QEJ9</accession>
<evidence type="ECO:0000255" key="1">
    <source>
        <dbReference type="PROSITE-ProRule" id="PRU00388"/>
    </source>
</evidence>
<evidence type="ECO:0000305" key="2"/>
<keyword id="KW-1185">Reference proteome</keyword>
<comment type="similarity">
    <text evidence="1">Belongs to the ubiquitin-conjugating enzyme family. FTS subfamily.</text>
</comment>
<comment type="caution">
    <text evidence="2">Lacks the conserved Cys residue necessary for ubiquitin-conjugating enzyme E2 activity.</text>
</comment>
<comment type="sequence caution" evidence="2">
    <conflict type="erroneous gene model prediction">
        <sequence resource="EMBL-CDS" id="EDX07873"/>
    </conflict>
</comment>
<organism>
    <name type="scientific">Drosophila simulans</name>
    <name type="common">Fruit fly</name>
    <dbReference type="NCBI Taxonomy" id="7240"/>
    <lineage>
        <taxon>Eukaryota</taxon>
        <taxon>Metazoa</taxon>
        <taxon>Ecdysozoa</taxon>
        <taxon>Arthropoda</taxon>
        <taxon>Hexapoda</taxon>
        <taxon>Insecta</taxon>
        <taxon>Pterygota</taxon>
        <taxon>Neoptera</taxon>
        <taxon>Endopterygota</taxon>
        <taxon>Diptera</taxon>
        <taxon>Brachycera</taxon>
        <taxon>Muscomorpha</taxon>
        <taxon>Ephydroidea</taxon>
        <taxon>Drosophilidae</taxon>
        <taxon>Drosophila</taxon>
        <taxon>Sophophora</taxon>
    </lineage>
</organism>
<proteinExistence type="inferred from homology"/>